<reference key="1">
    <citation type="journal article" date="1997" name="Genes Dev.">
        <title>Liguleless1 encodes a nuclear-localized protein required for induction of ligules and auricles during maize leaf organogenesis.</title>
        <authorList>
            <person name="Moreno M.A."/>
            <person name="Harper L.C."/>
            <person name="Krueger R.W."/>
            <person name="Dellaporta S.L."/>
            <person name="Freeling M."/>
        </authorList>
    </citation>
    <scope>NUCLEOTIDE SEQUENCE [MRNA]</scope>
    <source>
        <strain>cv. Wisconsin 22</strain>
        <tissue>Leaf</tissue>
    </source>
</reference>
<feature type="chain" id="PRO_0000132738" description="Protein LIGULELESS 1">
    <location>
        <begin position="1"/>
        <end position="399"/>
    </location>
</feature>
<feature type="zinc finger region" description="SBP-type" evidence="3">
    <location>
        <begin position="182"/>
        <end position="260"/>
    </location>
</feature>
<feature type="region of interest" description="Disordered" evidence="4">
    <location>
        <begin position="1"/>
        <end position="28"/>
    </location>
</feature>
<feature type="region of interest" description="Disordered" evidence="4">
    <location>
        <begin position="250"/>
        <end position="292"/>
    </location>
</feature>
<feature type="short sequence motif" description="Bipartite nuclear localization signal" evidence="2">
    <location>
        <begin position="243"/>
        <end position="259"/>
    </location>
</feature>
<feature type="compositionally biased region" description="Low complexity" evidence="4">
    <location>
        <begin position="15"/>
        <end position="24"/>
    </location>
</feature>
<feature type="compositionally biased region" description="Basic and acidic residues" evidence="4">
    <location>
        <begin position="261"/>
        <end position="270"/>
    </location>
</feature>
<feature type="binding site" evidence="3">
    <location>
        <position position="185"/>
    </location>
    <ligand>
        <name>Zn(2+)</name>
        <dbReference type="ChEBI" id="CHEBI:29105"/>
        <label>1</label>
    </ligand>
</feature>
<feature type="binding site" evidence="3">
    <location>
        <position position="190"/>
    </location>
    <ligand>
        <name>Zn(2+)</name>
        <dbReference type="ChEBI" id="CHEBI:29105"/>
        <label>1</label>
    </ligand>
</feature>
<feature type="binding site" evidence="3">
    <location>
        <position position="207"/>
    </location>
    <ligand>
        <name>Zn(2+)</name>
        <dbReference type="ChEBI" id="CHEBI:29105"/>
        <label>1</label>
    </ligand>
</feature>
<feature type="binding site" evidence="3">
    <location>
        <position position="210"/>
    </location>
    <ligand>
        <name>Zn(2+)</name>
        <dbReference type="ChEBI" id="CHEBI:29105"/>
        <label>1</label>
    </ligand>
</feature>
<feature type="binding site" evidence="3">
    <location>
        <position position="227"/>
    </location>
    <ligand>
        <name>Zn(2+)</name>
        <dbReference type="ChEBI" id="CHEBI:29105"/>
        <label>2</label>
    </ligand>
</feature>
<feature type="binding site" evidence="3">
    <location>
        <position position="230"/>
    </location>
    <ligand>
        <name>Zn(2+)</name>
        <dbReference type="ChEBI" id="CHEBI:29105"/>
        <label>2</label>
    </ligand>
</feature>
<feature type="binding site" evidence="3">
    <location>
        <position position="234"/>
    </location>
    <ligand>
        <name>Zn(2+)</name>
        <dbReference type="ChEBI" id="CHEBI:29105"/>
        <label>2</label>
    </ligand>
</feature>
<feature type="binding site" evidence="3">
    <location>
        <position position="246"/>
    </location>
    <ligand>
        <name>Zn(2+)</name>
        <dbReference type="ChEBI" id="CHEBI:29105"/>
        <label>2</label>
    </ligand>
</feature>
<organism>
    <name type="scientific">Zea mays</name>
    <name type="common">Maize</name>
    <dbReference type="NCBI Taxonomy" id="4577"/>
    <lineage>
        <taxon>Eukaryota</taxon>
        <taxon>Viridiplantae</taxon>
        <taxon>Streptophyta</taxon>
        <taxon>Embryophyta</taxon>
        <taxon>Tracheophyta</taxon>
        <taxon>Spermatophyta</taxon>
        <taxon>Magnoliopsida</taxon>
        <taxon>Liliopsida</taxon>
        <taxon>Poales</taxon>
        <taxon>Poaceae</taxon>
        <taxon>PACMAD clade</taxon>
        <taxon>Panicoideae</taxon>
        <taxon>Andropogonodae</taxon>
        <taxon>Andropogoneae</taxon>
        <taxon>Tripsacinae</taxon>
        <taxon>Zea</taxon>
    </lineage>
</organism>
<dbReference type="EMBL" id="U89496">
    <property type="protein sequence ID" value="AAB51071.1"/>
    <property type="molecule type" value="mRNA"/>
</dbReference>
<dbReference type="PIR" id="T04328">
    <property type="entry name" value="T04328"/>
</dbReference>
<dbReference type="SMR" id="O04003"/>
<dbReference type="STRING" id="4577.O04003"/>
<dbReference type="PaxDb" id="4577-GRMZM2G036297_P01"/>
<dbReference type="eggNOG" id="ENOG502QWHY">
    <property type="taxonomic scope" value="Eukaryota"/>
</dbReference>
<dbReference type="InParanoid" id="O04003"/>
<dbReference type="Proteomes" id="UP000007305">
    <property type="component" value="Unplaced"/>
</dbReference>
<dbReference type="ExpressionAtlas" id="O04003">
    <property type="expression patterns" value="baseline and differential"/>
</dbReference>
<dbReference type="GO" id="GO:0005634">
    <property type="term" value="C:nucleus"/>
    <property type="evidence" value="ECO:0007669"/>
    <property type="project" value="UniProtKB-SubCell"/>
</dbReference>
<dbReference type="GO" id="GO:0003677">
    <property type="term" value="F:DNA binding"/>
    <property type="evidence" value="ECO:0007669"/>
    <property type="project" value="InterPro"/>
</dbReference>
<dbReference type="GO" id="GO:0008270">
    <property type="term" value="F:zinc ion binding"/>
    <property type="evidence" value="ECO:0007669"/>
    <property type="project" value="UniProtKB-KW"/>
</dbReference>
<dbReference type="Gene3D" id="4.10.1100.10">
    <property type="entry name" value="Transcription factor, SBP-box domain"/>
    <property type="match status" value="1"/>
</dbReference>
<dbReference type="InterPro" id="IPR044817">
    <property type="entry name" value="SBP-like"/>
</dbReference>
<dbReference type="InterPro" id="IPR004333">
    <property type="entry name" value="SBP_dom"/>
</dbReference>
<dbReference type="InterPro" id="IPR036893">
    <property type="entry name" value="SBP_sf"/>
</dbReference>
<dbReference type="PANTHER" id="PTHR31251">
    <property type="entry name" value="SQUAMOSA PROMOTER-BINDING-LIKE PROTEIN 4"/>
    <property type="match status" value="1"/>
</dbReference>
<dbReference type="PANTHER" id="PTHR31251:SF198">
    <property type="entry name" value="SQUAMOSA PROMOTER-BINDING-LIKE PROTEIN 8"/>
    <property type="match status" value="1"/>
</dbReference>
<dbReference type="Pfam" id="PF03110">
    <property type="entry name" value="SBP"/>
    <property type="match status" value="1"/>
</dbReference>
<dbReference type="SUPFAM" id="SSF103612">
    <property type="entry name" value="SBT domain"/>
    <property type="match status" value="1"/>
</dbReference>
<dbReference type="PROSITE" id="PS51141">
    <property type="entry name" value="ZF_SBP"/>
    <property type="match status" value="1"/>
</dbReference>
<protein>
    <recommendedName>
        <fullName>Protein LIGULELESS 1</fullName>
    </recommendedName>
</protein>
<gene>
    <name type="primary">LG1</name>
</gene>
<accession>O04003</accession>
<keyword id="KW-0217">Developmental protein</keyword>
<keyword id="KW-0479">Metal-binding</keyword>
<keyword id="KW-0539">Nucleus</keyword>
<keyword id="KW-1185">Reference proteome</keyword>
<keyword id="KW-0862">Zinc</keyword>
<keyword id="KW-0863">Zinc-finger</keyword>
<comment type="function">
    <text>Involved in the formation of ligules and auricles during leaf organogenesis.</text>
</comment>
<comment type="subcellular location">
    <subcellularLocation>
        <location>Nucleus</location>
    </subcellularLocation>
</comment>
<comment type="tissue specificity">
    <text>Leaf ligular region, blade and sheath.</text>
</comment>
<comment type="developmental stage">
    <text>Developing leaves. Present at highest levels in very young ligules and auricles. Present pre- and post-ligule and auricle development.</text>
</comment>
<comment type="domain">
    <text evidence="1">The SBP-type zinc finger is required for the binding to DNA.</text>
</comment>
<name>LG1_MAIZE</name>
<proteinExistence type="evidence at transcript level"/>
<evidence type="ECO:0000250" key="1"/>
<evidence type="ECO:0000255" key="2"/>
<evidence type="ECO:0000255" key="3">
    <source>
        <dbReference type="PROSITE-ProRule" id="PRU00470"/>
    </source>
</evidence>
<evidence type="ECO:0000256" key="4">
    <source>
        <dbReference type="SAM" id="MobiDB-lite"/>
    </source>
</evidence>
<sequence length="399" mass="43367">MMNLSAAANGRDEFPPYVVPSNAAAPPPSLLPTMEQQQESSIHREHHQLLGYNLEANSLALLPPSNAAAAHHHTTFAGGHSPHDILHFYTPPPSAASHYLAAAAGNPYSHLVSAPGTTFHQTSSSYYPPAAAAQAAPEYYFPTLVSSAEENMASFAATQLGLNLGYRTYFPPRGGYTYGHHPPRCQAEGCKADLSSAKRYHRRHKVCEHHSKAPVVVTAGGLHQRFCQQCSRFHLLDEFDDAKKSCRKRLADHNRRRRKSKPSDADAGDKKRAHANKAAAAKDKAESSSKNMDIGDGLGAQILGSALLSKEQDQTMDLGEVVKEAVDPKGKASMQQHYGFPFHSSSAGSCFPQTQAVSSDTTSNIGQVQEPSLGFHHQHHQHSNILQLGQAMFDLDFDH</sequence>